<accession>Q62689</accession>
<proteinExistence type="evidence at protein level"/>
<sequence length="1132" mass="130585">MGMACLTMTEMEGTSTSPAHQNGDIPGNANSVKQTEPVLQVYLYHSLGQAEGDYLKFPNGEYVAEEICVAASKACGITPVYHNMFALMSETERIWYPPNHVFHIDESTRHNILYRIRFYFPHWYCSGSNRTYRYGVSRGAEAPLLDDFVMSYLFAQWRHDFVHGWIKVPVTHETQEECLGMAVLDMMRIAKEKDQTPLAVYNSISYKTFLPKCVRAKIQDYHILTRKRIRYRFRRFIQQFSQCKATARNLKLKYLINLETLQSAFYTEQFEVKESARGPSGEEIFATIIITGNGGIQWSRGKHKESETLTEQDLQLYCDFPDIIDVSIKQANQECSTESRVVTVHKQDGKVLEIELSSLKEALSFVSLIDGYYRLTADAHHYLCKEVAPPAVLENIHSNCHGPISMDFAISKLKKAGNQTGLYVLRCSPKDFNKYFLTFAVERENVIEYKHCLITKNENGEYNLSGTKRNFSSLKDLLNCYQMETVRSDSIIFQFTKCCPPKPKDKSNLLVFRTNGVSDVQLSPTLQRHNNVNQMVFHKIRNEDLIFNESLGQGTFTKIFKGVRREVGDYGQLHETEVLLKVLDKAHRNYSESFFEAASMMSQLSHKHLVLNYGVCVCGEENILVQEFVKFGSLDTYLKKNKNSINILWKLGVAKQLAWAMHFLEEKSLIHGNVCAKNILLIREEDRKTGNPPFIKLSDPGISITVLPKDILQERIPWVPPECIENPKNLTLATDKWSFGTTLWEICSGGDKPLSALDSQRKLQFYEDKHQLPAPKWTELANLINTCMDYEPDFRPAFRAVIRDLNSLFTPDYELLTENDMLPNMRIGALGFSGAFEDRDPTQFEERHLKFLQQLGKGNFGSVEMCRYDPLQDNTGEVVAVKKLQHSTEEHLRDFEREIEILKSLQHDNIVKYKGVCYSAGRRNLRLIMEYLPYGSLRDYLQKHKERIDHKKLLQYTSQICKGMEYLGTKRYIHRDLATRNILVENENRVKIGDFGLTKVLPQDKEYYKVKEPGESPIFWYAPESLTESKFSVASDVWSFGVVLYELFTYIEKSKSPPVEFMRMIGNDKQGQMIVFHLIELLKNNGRLPRPEGCPDEIYVIMTECWNNNVNQRPSFRDLSLRVDQIRDSMAA</sequence>
<evidence type="ECO:0000250" key="1"/>
<evidence type="ECO:0000250" key="2">
    <source>
        <dbReference type="UniProtKB" id="O60674"/>
    </source>
</evidence>
<evidence type="ECO:0000250" key="3">
    <source>
        <dbReference type="UniProtKB" id="Q62120"/>
    </source>
</evidence>
<evidence type="ECO:0000255" key="4">
    <source>
        <dbReference type="PROSITE-ProRule" id="PRU00084"/>
    </source>
</evidence>
<evidence type="ECO:0000255" key="5">
    <source>
        <dbReference type="PROSITE-ProRule" id="PRU00159"/>
    </source>
</evidence>
<evidence type="ECO:0000255" key="6">
    <source>
        <dbReference type="PROSITE-ProRule" id="PRU00191"/>
    </source>
</evidence>
<evidence type="ECO:0000255" key="7">
    <source>
        <dbReference type="PROSITE-ProRule" id="PRU10028"/>
    </source>
</evidence>
<evidence type="ECO:0000269" key="8">
    <source>
    </source>
</evidence>
<evidence type="ECO:0000305" key="9"/>
<evidence type="ECO:0000312" key="10">
    <source>
        <dbReference type="RGD" id="2939"/>
    </source>
</evidence>
<evidence type="ECO:0007744" key="11">
    <source>
    </source>
</evidence>
<comment type="function">
    <text evidence="2">Non-receptor tyrosine kinase involved in various processes such as cell growth, development, differentiation or histone modifications. Mediates essential signaling events in both innate and adaptive immunity. In the cytoplasm, plays a pivotal role in signal transduction via its association with type I receptors such as growth hormone (GHR), prolactin (PRLR), leptin (LEPR), erythropoietin (EPOR), thrombopoietin (THPO); or type II receptors including IFN-alpha, IFN-beta, IFN-gamma and multiple interleukins. Following ligand-binding to cell surface receptors, phosphorylates specific tyrosine residues on the cytoplasmic tails of the receptor, creating docking sites for STATs proteins. Subsequently, phosphorylates the STATs proteins once they are recruited to the receptor. Phosphorylated STATs then form homodimer or heterodimers and translocate to the nucleus to activate gene transcription. For example, cell stimulation with erythropoietin (EPO) during erythropoiesis leads to JAK2 autophosphorylation, activation, and its association with erythropoietin receptor (EPOR) that becomes phosphorylated in its cytoplasmic domain. Then, STAT5 (STAT5A or STAT5B) is recruited, phosphorylated and activated by JAK2. Once activated, dimerized STAT5 translocates into the nucleus and promotes the transcription of several essential genes involved in the modulation of erythropoiesis. Part of a signaling cascade that is activated by increased cellular retinol and that leads to the activation of STAT5 (STAT5A or STAT5B). In addition, JAK2 mediates angiotensin-2-induced ARHGEF1 phosphorylation. Plays a role in cell cycle by phosphorylating CDKN1B. Cooperates with TEC through reciprocal phosphorylation to mediate cytokine-driven activation of FOS transcription. In the nucleus, plays a key role in chromatin by specifically mediating phosphorylation of 'Tyr-41' of histone H3 (H3Y41ph), a specific tag that promotes exclusion of CBX5 (HP1 alpha) from chromatin. Up-regulates the potassium voltage-gated channel activity of KCNA3.</text>
</comment>
<comment type="catalytic activity">
    <reaction evidence="7">
        <text>L-tyrosyl-[protein] + ATP = O-phospho-L-tyrosyl-[protein] + ADP + H(+)</text>
        <dbReference type="Rhea" id="RHEA:10596"/>
        <dbReference type="Rhea" id="RHEA-COMP:10136"/>
        <dbReference type="Rhea" id="RHEA-COMP:20101"/>
        <dbReference type="ChEBI" id="CHEBI:15378"/>
        <dbReference type="ChEBI" id="CHEBI:30616"/>
        <dbReference type="ChEBI" id="CHEBI:46858"/>
        <dbReference type="ChEBI" id="CHEBI:61978"/>
        <dbReference type="ChEBI" id="CHEBI:456216"/>
        <dbReference type="EC" id="2.7.10.2"/>
    </reaction>
</comment>
<comment type="cofactor">
    <cofactor evidence="9">
        <name>Mg(2+)</name>
        <dbReference type="ChEBI" id="CHEBI:18420"/>
    </cofactor>
    <text evidence="9">Mn(2+) was used in the in vitro kinase assay but Mg(2+) is likely to be the in vivo cofactor.</text>
</comment>
<comment type="activity regulation">
    <text evidence="2 3">Regulated by autophosphorylation, can both activate or decrease activity. Heme regulates its activity by enhancing the phosphorylation on Tyr-1007 and Tyr-1008.</text>
</comment>
<comment type="subunit">
    <text evidence="2 3">Interacts with IL23R, SKB1 and STAM2 (By similarity). Interacts with EPOR. Interacts with LYN. Interacts with SIRPA. Interacts with SH2B1. Interacts with TEC (By similarity). Interacts with IFNGR2 (via intracellular domain) (By similarity). Interacts with LEPR (Isoform B) (By similarity). Interacts with HSP90AB1; promotes functional activation in a heat shock-dependent manner. Interacts with STRA6 (By similarity). Interacts with ASB2; the interaction targets JAK2 for Notch-induced proteasomal degradation (By similarity).</text>
</comment>
<comment type="interaction">
    <interactant intactId="EBI-8656708">
        <id>Q62689</id>
    </interactant>
    <interactant intactId="EBI-7472166">
        <id>P15127</id>
        <label>Insr</label>
    </interactant>
    <organismsDiffer>false</organismsDiffer>
    <experiments>2</experiments>
</comment>
<comment type="interaction">
    <interactant intactId="EBI-8656708">
        <id>Q62689</id>
    </interactant>
    <interactant intactId="EBI-7180604">
        <id>P41499</id>
        <label>Ptpn11</label>
    </interactant>
    <organismsDiffer>false</organismsDiffer>
    <experiments>3</experiments>
</comment>
<comment type="subcellular location">
    <subcellularLocation>
        <location evidence="1">Endomembrane system</location>
        <topology evidence="1">Peripheral membrane protein</topology>
    </subcellularLocation>
    <subcellularLocation>
        <location evidence="1">Cytoplasm</location>
    </subcellularLocation>
    <subcellularLocation>
        <location evidence="1">Nucleus</location>
    </subcellularLocation>
</comment>
<comment type="tissue specificity">
    <text evidence="8">Ubiquitously expressed throughout most tissues.</text>
</comment>
<comment type="domain">
    <text evidence="1">The N-terminal domain of JAKs mediates their interaction with cytokine/interferon/growth hormone receptors. Possesses 2 protein kinase domains. The second one probably contains the catalytic domain, while the presence of slight differences suggest a different role for protein kinase 1 (By similarity).</text>
</comment>
<comment type="PTM">
    <text evidence="2 3">Autophosphorylated, leading to regulate its activity. Leptin promotes phosphorylation on tyrosine residues, including phosphorylation on Tyr-813. Autophosphorylation on Tyr-119 in response to EPO down-regulates its kinase activity. Autophosphorylation on Tyr-868, Tyr-966 and Tyr-972 in response to growth hormone (GH) are required for maximal kinase activity. Also phosphorylated by TEC (By similarity). Phosphorylated on tyrosine residues in response to interferon gamma signaling. Phosphorylated on tyrosine residues in response to a signaling cascade that is activated by increased cellular retinol (By similarity).</text>
</comment>
<comment type="PTM">
    <text evidence="2">Undergoes Notch-induced ubiquitination and subsequent proteasomal degradation which is mediated by ASB1 or ASB2, the substrate-recognition components of probable ECS E3 ubiquitin-protein ligase complexes.</text>
</comment>
<comment type="similarity">
    <text evidence="5">Belongs to the protein kinase superfamily. Tyr protein kinase family. JAK subfamily.</text>
</comment>
<keyword id="KW-1064">Adaptive immunity</keyword>
<keyword id="KW-0067">ATP-binding</keyword>
<keyword id="KW-0156">Chromatin regulator</keyword>
<keyword id="KW-0963">Cytoplasm</keyword>
<keyword id="KW-0391">Immunity</keyword>
<keyword id="KW-0399">Innate immunity</keyword>
<keyword id="KW-0418">Kinase</keyword>
<keyword id="KW-0460">Magnesium</keyword>
<keyword id="KW-0472">Membrane</keyword>
<keyword id="KW-0479">Metal-binding</keyword>
<keyword id="KW-0547">Nucleotide-binding</keyword>
<keyword id="KW-0539">Nucleus</keyword>
<keyword id="KW-0597">Phosphoprotein</keyword>
<keyword id="KW-1185">Reference proteome</keyword>
<keyword id="KW-0677">Repeat</keyword>
<keyword id="KW-0727">SH2 domain</keyword>
<keyword id="KW-0808">Transferase</keyword>
<keyword id="KW-0829">Tyrosine-protein kinase</keyword>
<keyword id="KW-0832">Ubl conjugation</keyword>
<reference key="1">
    <citation type="journal article" date="1995" name="Gene">
        <title>Cloning of the gene encoding rat JAK2, a protein tyrosine kinase.</title>
        <authorList>
            <person name="Duhe R.J."/>
            <person name="Rui H."/>
            <person name="Greenwood J.D."/>
            <person name="Garvey K."/>
            <person name="Farrar W.L."/>
        </authorList>
    </citation>
    <scope>NUCLEOTIDE SEQUENCE [MRNA]</scope>
    <scope>TISSUE SPECIFICITY</scope>
</reference>
<reference key="2">
    <citation type="journal article" date="2012" name="Nat. Commun.">
        <title>Quantitative maps of protein phosphorylation sites across 14 different rat organs and tissues.</title>
        <authorList>
            <person name="Lundby A."/>
            <person name="Secher A."/>
            <person name="Lage K."/>
            <person name="Nordsborg N.B."/>
            <person name="Dmytriyev A."/>
            <person name="Lundby C."/>
            <person name="Olsen J.V."/>
        </authorList>
    </citation>
    <scope>PHOSPHORYLATION [LARGE SCALE ANALYSIS] AT SER-523</scope>
    <scope>IDENTIFICATION BY MASS SPECTROMETRY [LARGE SCALE ANALYSIS]</scope>
</reference>
<feature type="chain" id="PRO_0000088114" description="Tyrosine-protein kinase JAK2">
    <location>
        <begin position="1"/>
        <end position="1132"/>
    </location>
</feature>
<feature type="domain" description="FERM" evidence="4">
    <location>
        <begin position="37"/>
        <end position="380"/>
    </location>
</feature>
<feature type="domain" description="SH2; atypical" evidence="6">
    <location>
        <begin position="401"/>
        <end position="482"/>
    </location>
</feature>
<feature type="domain" description="Protein kinase 1" evidence="5">
    <location>
        <begin position="545"/>
        <end position="809"/>
    </location>
</feature>
<feature type="domain" description="Protein kinase 2" evidence="5">
    <location>
        <begin position="849"/>
        <end position="1126"/>
    </location>
</feature>
<feature type="region of interest" description="Interaction with cytokine/interferon/growth hormone receptors" evidence="1">
    <location>
        <begin position="1"/>
        <end position="239"/>
    </location>
</feature>
<feature type="active site" description="Proton acceptor" evidence="5 7">
    <location>
        <position position="976"/>
    </location>
</feature>
<feature type="binding site" evidence="5">
    <location>
        <begin position="855"/>
        <end position="863"/>
    </location>
    <ligand>
        <name>ATP</name>
        <dbReference type="ChEBI" id="CHEBI:30616"/>
    </ligand>
</feature>
<feature type="binding site" evidence="5">
    <location>
        <position position="882"/>
    </location>
    <ligand>
        <name>ATP</name>
        <dbReference type="ChEBI" id="CHEBI:30616"/>
    </ligand>
</feature>
<feature type="modified residue" description="Phosphotyrosine; by autocatalysis" evidence="3">
    <location>
        <position position="119"/>
    </location>
</feature>
<feature type="modified residue" description="Phosphotyrosine" evidence="3">
    <location>
        <position position="372"/>
    </location>
</feature>
<feature type="modified residue" description="Phosphotyrosine" evidence="3">
    <location>
        <position position="373"/>
    </location>
</feature>
<feature type="modified residue" description="Phosphoserine" evidence="11">
    <location>
        <position position="523"/>
    </location>
</feature>
<feature type="modified residue" description="Phosphotyrosine" evidence="2">
    <location>
        <position position="570"/>
    </location>
</feature>
<feature type="modified residue" description="Phosphotyrosine" evidence="3">
    <location>
        <position position="813"/>
    </location>
</feature>
<feature type="modified residue" description="Phosphotyrosine; by autocatalysis" evidence="3">
    <location>
        <position position="868"/>
    </location>
</feature>
<feature type="modified residue" description="Phosphotyrosine; by autocatalysis" evidence="3">
    <location>
        <position position="966"/>
    </location>
</feature>
<feature type="modified residue" description="Phosphotyrosine; by autocatalysis" evidence="3">
    <location>
        <position position="972"/>
    </location>
</feature>
<feature type="modified residue" description="Phosphotyrosine; by autocatalysis" evidence="2">
    <location>
        <position position="1007"/>
    </location>
</feature>
<feature type="modified residue" description="Phosphotyrosine; by autocatalysis" evidence="2">
    <location>
        <position position="1008"/>
    </location>
</feature>
<organism>
    <name type="scientific">Rattus norvegicus</name>
    <name type="common">Rat</name>
    <dbReference type="NCBI Taxonomy" id="10116"/>
    <lineage>
        <taxon>Eukaryota</taxon>
        <taxon>Metazoa</taxon>
        <taxon>Chordata</taxon>
        <taxon>Craniata</taxon>
        <taxon>Vertebrata</taxon>
        <taxon>Euteleostomi</taxon>
        <taxon>Mammalia</taxon>
        <taxon>Eutheria</taxon>
        <taxon>Euarchontoglires</taxon>
        <taxon>Glires</taxon>
        <taxon>Rodentia</taxon>
        <taxon>Myomorpha</taxon>
        <taxon>Muroidea</taxon>
        <taxon>Muridae</taxon>
        <taxon>Murinae</taxon>
        <taxon>Rattus</taxon>
    </lineage>
</organism>
<dbReference type="EC" id="2.7.10.2" evidence="2"/>
<dbReference type="EMBL" id="U13396">
    <property type="protein sequence ID" value="AAA79911.1"/>
    <property type="molecule type" value="mRNA"/>
</dbReference>
<dbReference type="PIR" id="JC4127">
    <property type="entry name" value="JC4127"/>
</dbReference>
<dbReference type="RefSeq" id="NP_113702.1">
    <property type="nucleotide sequence ID" value="NM_031514.1"/>
</dbReference>
<dbReference type="SMR" id="Q62689"/>
<dbReference type="BioGRID" id="246670">
    <property type="interactions" value="9"/>
</dbReference>
<dbReference type="CORUM" id="Q62689"/>
<dbReference type="DIP" id="DIP-491N"/>
<dbReference type="FunCoup" id="Q62689">
    <property type="interactions" value="2729"/>
</dbReference>
<dbReference type="IntAct" id="Q62689">
    <property type="interactions" value="3"/>
</dbReference>
<dbReference type="MINT" id="Q62689"/>
<dbReference type="STRING" id="10116.ENSRNOP00000071877"/>
<dbReference type="BindingDB" id="Q62689"/>
<dbReference type="ChEMBL" id="CHEMBL1075225"/>
<dbReference type="DrugCentral" id="Q62689"/>
<dbReference type="iPTMnet" id="Q62689"/>
<dbReference type="PhosphoSitePlus" id="Q62689"/>
<dbReference type="PaxDb" id="10116-ENSRNOP00000021218"/>
<dbReference type="Ensembl" id="ENSRNOT00000087011.2">
    <property type="protein sequence ID" value="ENSRNOP00000071877.1"/>
    <property type="gene ID" value="ENSRNOG00000059968.2"/>
</dbReference>
<dbReference type="GeneID" id="24514"/>
<dbReference type="KEGG" id="rno:24514"/>
<dbReference type="UCSC" id="RGD:2939">
    <property type="organism name" value="rat"/>
</dbReference>
<dbReference type="AGR" id="RGD:2939"/>
<dbReference type="CTD" id="3717"/>
<dbReference type="RGD" id="2939">
    <property type="gene designation" value="Jak2"/>
</dbReference>
<dbReference type="eggNOG" id="KOG0197">
    <property type="taxonomic scope" value="Eukaryota"/>
</dbReference>
<dbReference type="GeneTree" id="ENSGT00940000155640"/>
<dbReference type="HOGENOM" id="CLU_008155_1_0_1"/>
<dbReference type="InParanoid" id="Q62689"/>
<dbReference type="OMA" id="RCHNILV"/>
<dbReference type="OrthoDB" id="1915767at2759"/>
<dbReference type="PhylomeDB" id="Q62689"/>
<dbReference type="BRENDA" id="2.7.10.2">
    <property type="organism ID" value="5301"/>
</dbReference>
<dbReference type="Reactome" id="R-RNO-1059683">
    <property type="pathway name" value="Interleukin-6 signaling"/>
</dbReference>
<dbReference type="Reactome" id="R-RNO-110056">
    <property type="pathway name" value="MAPK3 (ERK1) activation"/>
</dbReference>
<dbReference type="Reactome" id="R-RNO-112411">
    <property type="pathway name" value="MAPK1 (ERK2) activation"/>
</dbReference>
<dbReference type="Reactome" id="R-RNO-1170546">
    <property type="pathway name" value="Prolactin receptor signaling"/>
</dbReference>
<dbReference type="Reactome" id="R-RNO-1433557">
    <property type="pathway name" value="Signaling by SCF-KIT"/>
</dbReference>
<dbReference type="Reactome" id="R-RNO-512988">
    <property type="pathway name" value="Interleukin-3, Interleukin-5 and GM-CSF signaling"/>
</dbReference>
<dbReference type="Reactome" id="R-RNO-5673000">
    <property type="pathway name" value="RAF activation"/>
</dbReference>
<dbReference type="Reactome" id="R-RNO-5673001">
    <property type="pathway name" value="RAF/MAP kinase cascade"/>
</dbReference>
<dbReference type="Reactome" id="R-RNO-6785807">
    <property type="pathway name" value="Interleukin-4 and Interleukin-13 signaling"/>
</dbReference>
<dbReference type="Reactome" id="R-RNO-6788467">
    <property type="pathway name" value="IL-6-type cytokine receptor ligand interactions"/>
</dbReference>
<dbReference type="Reactome" id="R-RNO-69231">
    <property type="pathway name" value="Cyclin D associated events in G1"/>
</dbReference>
<dbReference type="Reactome" id="R-RNO-877300">
    <property type="pathway name" value="Interferon gamma signaling"/>
</dbReference>
<dbReference type="Reactome" id="R-RNO-877312">
    <property type="pathway name" value="Regulation of IFNG signaling"/>
</dbReference>
<dbReference type="Reactome" id="R-RNO-8854691">
    <property type="pathway name" value="Interleukin-20 family signaling"/>
</dbReference>
<dbReference type="Reactome" id="R-RNO-8984722">
    <property type="pathway name" value="Interleukin-35 Signalling"/>
</dbReference>
<dbReference type="Reactome" id="R-RNO-9006335">
    <property type="pathway name" value="Signaling by Erythropoietin"/>
</dbReference>
<dbReference type="Reactome" id="R-RNO-9020591">
    <property type="pathway name" value="Interleukin-12 signaling"/>
</dbReference>
<dbReference type="Reactome" id="R-RNO-9020933">
    <property type="pathway name" value="Interleukin-23 signaling"/>
</dbReference>
<dbReference type="Reactome" id="R-RNO-9020956">
    <property type="pathway name" value="Interleukin-27 signaling"/>
</dbReference>
<dbReference type="Reactome" id="R-RNO-9027276">
    <property type="pathway name" value="Erythropoietin activates Phosphoinositide-3-kinase (PI3K)"/>
</dbReference>
<dbReference type="Reactome" id="R-RNO-9027284">
    <property type="pathway name" value="Erythropoietin activates RAS"/>
</dbReference>
<dbReference type="Reactome" id="R-RNO-912526">
    <property type="pathway name" value="Interleukin receptor SHC signaling"/>
</dbReference>
<dbReference type="Reactome" id="R-RNO-9674555">
    <property type="pathway name" value="Signaling by CSF3 (G-CSF)"/>
</dbReference>
<dbReference type="Reactome" id="R-RNO-9705462">
    <property type="pathway name" value="Inactivation of CSF3 (G-CSF) signaling"/>
</dbReference>
<dbReference type="Reactome" id="R-RNO-9732724">
    <property type="pathway name" value="IFNG signaling activates MAPKs"/>
</dbReference>
<dbReference type="Reactome" id="R-RNO-982772">
    <property type="pathway name" value="Growth hormone receptor signaling"/>
</dbReference>
<dbReference type="Reactome" id="R-RNO-983231">
    <property type="pathway name" value="Factors involved in megakaryocyte development and platelet production"/>
</dbReference>
<dbReference type="PRO" id="PR:Q62689"/>
<dbReference type="Proteomes" id="UP000002494">
    <property type="component" value="Chromosome 1"/>
</dbReference>
<dbReference type="Bgee" id="ENSRNOG00000059968">
    <property type="expression patterns" value="Expressed in thymus and 20 other cell types or tissues"/>
</dbReference>
<dbReference type="GO" id="GO:0005901">
    <property type="term" value="C:caveola"/>
    <property type="evidence" value="ECO:0000266"/>
    <property type="project" value="RGD"/>
</dbReference>
<dbReference type="GO" id="GO:0005737">
    <property type="term" value="C:cytoplasm"/>
    <property type="evidence" value="ECO:0000266"/>
    <property type="project" value="RGD"/>
</dbReference>
<dbReference type="GO" id="GO:0009898">
    <property type="term" value="C:cytoplasmic side of plasma membrane"/>
    <property type="evidence" value="ECO:0000266"/>
    <property type="project" value="RGD"/>
</dbReference>
<dbReference type="GO" id="GO:0005856">
    <property type="term" value="C:cytoskeleton"/>
    <property type="evidence" value="ECO:0007669"/>
    <property type="project" value="InterPro"/>
</dbReference>
<dbReference type="GO" id="GO:0005829">
    <property type="term" value="C:cytosol"/>
    <property type="evidence" value="ECO:0000318"/>
    <property type="project" value="GO_Central"/>
</dbReference>
<dbReference type="GO" id="GO:0012505">
    <property type="term" value="C:endomembrane system"/>
    <property type="evidence" value="ECO:0007669"/>
    <property type="project" value="UniProtKB-SubCell"/>
</dbReference>
<dbReference type="GO" id="GO:0000791">
    <property type="term" value="C:euchromatin"/>
    <property type="evidence" value="ECO:0000314"/>
    <property type="project" value="RGD"/>
</dbReference>
<dbReference type="GO" id="GO:0031234">
    <property type="term" value="C:extrinsic component of cytoplasmic side of plasma membrane"/>
    <property type="evidence" value="ECO:0000266"/>
    <property type="project" value="RGD"/>
</dbReference>
<dbReference type="GO" id="GO:0019897">
    <property type="term" value="C:extrinsic component of plasma membrane"/>
    <property type="evidence" value="ECO:0000266"/>
    <property type="project" value="RGD"/>
</dbReference>
<dbReference type="GO" id="GO:0005925">
    <property type="term" value="C:focal adhesion"/>
    <property type="evidence" value="ECO:0007669"/>
    <property type="project" value="Ensembl"/>
</dbReference>
<dbReference type="GO" id="GO:0098978">
    <property type="term" value="C:glutamatergic synapse"/>
    <property type="evidence" value="ECO:0000314"/>
    <property type="project" value="SynGO"/>
</dbReference>
<dbReference type="GO" id="GO:0030526">
    <property type="term" value="C:granulocyte macrophage colony-stimulating factor receptor complex"/>
    <property type="evidence" value="ECO:0000266"/>
    <property type="project" value="RGD"/>
</dbReference>
<dbReference type="GO" id="GO:0042022">
    <property type="term" value="C:interleukin-12 receptor complex"/>
    <property type="evidence" value="ECO:0000266"/>
    <property type="project" value="RGD"/>
</dbReference>
<dbReference type="GO" id="GO:0072536">
    <property type="term" value="C:interleukin-23 receptor complex"/>
    <property type="evidence" value="ECO:0000266"/>
    <property type="project" value="RGD"/>
</dbReference>
<dbReference type="GO" id="GO:0045121">
    <property type="term" value="C:membrane raft"/>
    <property type="evidence" value="ECO:0000266"/>
    <property type="project" value="RGD"/>
</dbReference>
<dbReference type="GO" id="GO:0005654">
    <property type="term" value="C:nucleoplasm"/>
    <property type="evidence" value="ECO:0007669"/>
    <property type="project" value="Ensembl"/>
</dbReference>
<dbReference type="GO" id="GO:0005634">
    <property type="term" value="C:nucleus"/>
    <property type="evidence" value="ECO:0000250"/>
    <property type="project" value="UniProtKB"/>
</dbReference>
<dbReference type="GO" id="GO:0098794">
    <property type="term" value="C:postsynapse"/>
    <property type="evidence" value="ECO:0000314"/>
    <property type="project" value="SynGO"/>
</dbReference>
<dbReference type="GO" id="GO:0033130">
    <property type="term" value="F:acetylcholine receptor binding"/>
    <property type="evidence" value="ECO:0000353"/>
    <property type="project" value="RGD"/>
</dbReference>
<dbReference type="GO" id="GO:0005524">
    <property type="term" value="F:ATP binding"/>
    <property type="evidence" value="ECO:0007669"/>
    <property type="project" value="UniProtKB-KW"/>
</dbReference>
<dbReference type="GO" id="GO:0005131">
    <property type="term" value="F:growth hormone receptor binding"/>
    <property type="evidence" value="ECO:0000353"/>
    <property type="project" value="BHF-UCL"/>
</dbReference>
<dbReference type="GO" id="GO:0020037">
    <property type="term" value="F:heme binding"/>
    <property type="evidence" value="ECO:0000250"/>
    <property type="project" value="UniProtKB"/>
</dbReference>
<dbReference type="GO" id="GO:0042393">
    <property type="term" value="F:histone binding"/>
    <property type="evidence" value="ECO:0000266"/>
    <property type="project" value="RGD"/>
</dbReference>
<dbReference type="GO" id="GO:0035401">
    <property type="term" value="F:histone H3Y41 kinase activity"/>
    <property type="evidence" value="ECO:0000250"/>
    <property type="project" value="UniProtKB"/>
</dbReference>
<dbReference type="GO" id="GO:0042802">
    <property type="term" value="F:identical protein binding"/>
    <property type="evidence" value="ECO:0000266"/>
    <property type="project" value="RGD"/>
</dbReference>
<dbReference type="GO" id="GO:0043560">
    <property type="term" value="F:insulin receptor substrate binding"/>
    <property type="evidence" value="ECO:0000353"/>
    <property type="project" value="RGD"/>
</dbReference>
<dbReference type="GO" id="GO:0005143">
    <property type="term" value="F:interleukin-12 receptor binding"/>
    <property type="evidence" value="ECO:0000266"/>
    <property type="project" value="RGD"/>
</dbReference>
<dbReference type="GO" id="GO:0046872">
    <property type="term" value="F:metal ion binding"/>
    <property type="evidence" value="ECO:0007669"/>
    <property type="project" value="UniProtKB-KW"/>
</dbReference>
<dbReference type="GO" id="GO:0004715">
    <property type="term" value="F:non-membrane spanning protein tyrosine kinase activity"/>
    <property type="evidence" value="ECO:0000266"/>
    <property type="project" value="RGD"/>
</dbReference>
<dbReference type="GO" id="GO:0051428">
    <property type="term" value="F:peptide hormone receptor binding"/>
    <property type="evidence" value="ECO:0000353"/>
    <property type="project" value="RGD"/>
</dbReference>
<dbReference type="GO" id="GO:0043548">
    <property type="term" value="F:phosphatidylinositol 3-kinase binding"/>
    <property type="evidence" value="ECO:0000353"/>
    <property type="project" value="RGD"/>
</dbReference>
<dbReference type="GO" id="GO:0019901">
    <property type="term" value="F:protein kinase binding"/>
    <property type="evidence" value="ECO:0000266"/>
    <property type="project" value="RGD"/>
</dbReference>
<dbReference type="GO" id="GO:0004713">
    <property type="term" value="F:protein tyrosine kinase activity"/>
    <property type="evidence" value="ECO:0000315"/>
    <property type="project" value="RGD"/>
</dbReference>
<dbReference type="GO" id="GO:0042169">
    <property type="term" value="F:SH2 domain binding"/>
    <property type="evidence" value="ECO:0000266"/>
    <property type="project" value="RGD"/>
</dbReference>
<dbReference type="GO" id="GO:0030546">
    <property type="term" value="F:signaling receptor activator activity"/>
    <property type="evidence" value="ECO:0000266"/>
    <property type="project" value="RGD"/>
</dbReference>
<dbReference type="GO" id="GO:0005102">
    <property type="term" value="F:signaling receptor binding"/>
    <property type="evidence" value="ECO:0000266"/>
    <property type="project" value="RGD"/>
</dbReference>
<dbReference type="GO" id="GO:0031702">
    <property type="term" value="F:type 1 angiotensin receptor binding"/>
    <property type="evidence" value="ECO:0000353"/>
    <property type="project" value="RGD"/>
</dbReference>
<dbReference type="GO" id="GO:0042976">
    <property type="term" value="P:activation of Janus kinase activity"/>
    <property type="evidence" value="ECO:0000250"/>
    <property type="project" value="UniProtKB"/>
</dbReference>
<dbReference type="GO" id="GO:0002250">
    <property type="term" value="P:adaptive immune response"/>
    <property type="evidence" value="ECO:0007669"/>
    <property type="project" value="UniProtKB-KW"/>
</dbReference>
<dbReference type="GO" id="GO:0031103">
    <property type="term" value="P:axon regeneration"/>
    <property type="evidence" value="ECO:0000315"/>
    <property type="project" value="RGD"/>
</dbReference>
<dbReference type="GO" id="GO:0007155">
    <property type="term" value="P:cell adhesion"/>
    <property type="evidence" value="ECO:0000266"/>
    <property type="project" value="RGD"/>
</dbReference>
<dbReference type="GO" id="GO:0030154">
    <property type="term" value="P:cell differentiation"/>
    <property type="evidence" value="ECO:0000266"/>
    <property type="project" value="RGD"/>
</dbReference>
<dbReference type="GO" id="GO:0007259">
    <property type="term" value="P:cell surface receptor signaling pathway via JAK-STAT"/>
    <property type="evidence" value="ECO:0000314"/>
    <property type="project" value="RGD"/>
</dbReference>
<dbReference type="GO" id="GO:0071549">
    <property type="term" value="P:cellular response to dexamethasone stimulus"/>
    <property type="evidence" value="ECO:0000266"/>
    <property type="project" value="RGD"/>
</dbReference>
<dbReference type="GO" id="GO:0036016">
    <property type="term" value="P:cellular response to interleukin-3"/>
    <property type="evidence" value="ECO:0000266"/>
    <property type="project" value="RGD"/>
</dbReference>
<dbReference type="GO" id="GO:0071222">
    <property type="term" value="P:cellular response to lipopolysaccharide"/>
    <property type="evidence" value="ECO:0000266"/>
    <property type="project" value="RGD"/>
</dbReference>
<dbReference type="GO" id="GO:0038065">
    <property type="term" value="P:collagen-activated signaling pathway"/>
    <property type="evidence" value="ECO:0000266"/>
    <property type="project" value="RGD"/>
</dbReference>
<dbReference type="GO" id="GO:0019221">
    <property type="term" value="P:cytokine-mediated signaling pathway"/>
    <property type="evidence" value="ECO:0000250"/>
    <property type="project" value="UniProtKB"/>
</dbReference>
<dbReference type="GO" id="GO:0140546">
    <property type="term" value="P:defense response to symbiont"/>
    <property type="evidence" value="ECO:0000266"/>
    <property type="project" value="RGD"/>
</dbReference>
<dbReference type="GO" id="GO:0007167">
    <property type="term" value="P:enzyme-linked receptor protein signaling pathway"/>
    <property type="evidence" value="ECO:0000266"/>
    <property type="project" value="RGD"/>
</dbReference>
<dbReference type="GO" id="GO:0030218">
    <property type="term" value="P:erythrocyte differentiation"/>
    <property type="evidence" value="ECO:0000250"/>
    <property type="project" value="UniProtKB"/>
</dbReference>
<dbReference type="GO" id="GO:0038162">
    <property type="term" value="P:erythropoietin-mediated signaling pathway"/>
    <property type="evidence" value="ECO:0000266"/>
    <property type="project" value="RGD"/>
</dbReference>
<dbReference type="GO" id="GO:0097191">
    <property type="term" value="P:extrinsic apoptotic signaling pathway"/>
    <property type="evidence" value="ECO:0000266"/>
    <property type="project" value="RGD"/>
</dbReference>
<dbReference type="GO" id="GO:0038157">
    <property type="term" value="P:granulocyte-macrophage colony-stimulating factor signaling pathway"/>
    <property type="evidence" value="ECO:0000266"/>
    <property type="project" value="RGD"/>
</dbReference>
<dbReference type="GO" id="GO:0060396">
    <property type="term" value="P:growth hormone receptor signaling pathway"/>
    <property type="evidence" value="ECO:0000266"/>
    <property type="project" value="RGD"/>
</dbReference>
<dbReference type="GO" id="GO:0060397">
    <property type="term" value="P:growth hormone receptor signaling pathway via JAK-STAT"/>
    <property type="evidence" value="ECO:0000314"/>
    <property type="project" value="RGD"/>
</dbReference>
<dbReference type="GO" id="GO:0009755">
    <property type="term" value="P:hormone-mediated signaling pathway"/>
    <property type="evidence" value="ECO:0000314"/>
    <property type="project" value="RGD"/>
</dbReference>
<dbReference type="GO" id="GO:0035722">
    <property type="term" value="P:interleukin-12-mediated signaling pathway"/>
    <property type="evidence" value="ECO:0000266"/>
    <property type="project" value="RGD"/>
</dbReference>
<dbReference type="GO" id="GO:0038155">
    <property type="term" value="P:interleukin-23-mediated signaling pathway"/>
    <property type="evidence" value="ECO:0000266"/>
    <property type="project" value="RGD"/>
</dbReference>
<dbReference type="GO" id="GO:0038156">
    <property type="term" value="P:interleukin-3-mediated signaling pathway"/>
    <property type="evidence" value="ECO:0000266"/>
    <property type="project" value="RGD"/>
</dbReference>
<dbReference type="GO" id="GO:0038043">
    <property type="term" value="P:interleukin-5-mediated signaling pathway"/>
    <property type="evidence" value="ECO:0000266"/>
    <property type="project" value="RGD"/>
</dbReference>
<dbReference type="GO" id="GO:0035556">
    <property type="term" value="P:intracellular signal transduction"/>
    <property type="evidence" value="ECO:0000266"/>
    <property type="project" value="RGD"/>
</dbReference>
<dbReference type="GO" id="GO:0008631">
    <property type="term" value="P:intrinsic apoptotic signaling pathway in response to oxidative stress"/>
    <property type="evidence" value="ECO:0000315"/>
    <property type="project" value="RGD"/>
</dbReference>
<dbReference type="GO" id="GO:0031663">
    <property type="term" value="P:lipopolysaccharide-mediated signaling pathway"/>
    <property type="evidence" value="ECO:0000266"/>
    <property type="project" value="RGD"/>
</dbReference>
<dbReference type="GO" id="GO:0061180">
    <property type="term" value="P:mammary gland epithelium development"/>
    <property type="evidence" value="ECO:0000266"/>
    <property type="project" value="RGD"/>
</dbReference>
<dbReference type="GO" id="GO:0001774">
    <property type="term" value="P:microglial cell activation"/>
    <property type="evidence" value="ECO:0000266"/>
    <property type="project" value="RGD"/>
</dbReference>
<dbReference type="GO" id="GO:0050804">
    <property type="term" value="P:modulation of chemical synaptic transmission"/>
    <property type="evidence" value="ECO:0000314"/>
    <property type="project" value="SynGO"/>
</dbReference>
<dbReference type="GO" id="GO:0030099">
    <property type="term" value="P:myeloid cell differentiation"/>
    <property type="evidence" value="ECO:0000266"/>
    <property type="project" value="RGD"/>
</dbReference>
<dbReference type="GO" id="GO:0043066">
    <property type="term" value="P:negative regulation of apoptotic process"/>
    <property type="evidence" value="ECO:0000315"/>
    <property type="project" value="RGD"/>
</dbReference>
<dbReference type="GO" id="GO:0010667">
    <property type="term" value="P:negative regulation of cardiac muscle cell apoptotic process"/>
    <property type="evidence" value="ECO:0000315"/>
    <property type="project" value="RGD"/>
</dbReference>
<dbReference type="GO" id="GO:0008285">
    <property type="term" value="P:negative regulation of cell population proliferation"/>
    <property type="evidence" value="ECO:0000266"/>
    <property type="project" value="RGD"/>
</dbReference>
<dbReference type="GO" id="GO:0022408">
    <property type="term" value="P:negative regulation of cell-cell adhesion"/>
    <property type="evidence" value="ECO:0000315"/>
    <property type="project" value="RGD"/>
</dbReference>
<dbReference type="GO" id="GO:1900016">
    <property type="term" value="P:negative regulation of cytokine production involved in inflammatory response"/>
    <property type="evidence" value="ECO:0007669"/>
    <property type="project" value="Ensembl"/>
</dbReference>
<dbReference type="GO" id="GO:0043524">
    <property type="term" value="P:negative regulation of neuron apoptotic process"/>
    <property type="evidence" value="ECO:0000315"/>
    <property type="project" value="RGD"/>
</dbReference>
<dbReference type="GO" id="GO:0031959">
    <property type="term" value="P:nuclear receptor-mediated mineralocorticoid signaling pathway"/>
    <property type="evidence" value="ECO:0000315"/>
    <property type="project" value="RGD"/>
</dbReference>
<dbReference type="GO" id="GO:0048008">
    <property type="term" value="P:platelet-derived growth factor receptor signaling pathway"/>
    <property type="evidence" value="ECO:0000315"/>
    <property type="project" value="RGD"/>
</dbReference>
<dbReference type="GO" id="GO:0043065">
    <property type="term" value="P:positive regulation of apoptotic process"/>
    <property type="evidence" value="ECO:0000315"/>
    <property type="project" value="RGD"/>
</dbReference>
<dbReference type="GO" id="GO:2001235">
    <property type="term" value="P:positive regulation of apoptotic signaling pathway"/>
    <property type="evidence" value="ECO:0000266"/>
    <property type="project" value="RGD"/>
</dbReference>
<dbReference type="GO" id="GO:0050867">
    <property type="term" value="P:positive regulation of cell activation"/>
    <property type="evidence" value="ECO:0000315"/>
    <property type="project" value="RGD"/>
</dbReference>
<dbReference type="GO" id="GO:0045597">
    <property type="term" value="P:positive regulation of cell differentiation"/>
    <property type="evidence" value="ECO:0000315"/>
    <property type="project" value="RGD"/>
</dbReference>
<dbReference type="GO" id="GO:0030335">
    <property type="term" value="P:positive regulation of cell migration"/>
    <property type="evidence" value="ECO:0000315"/>
    <property type="project" value="RGD"/>
</dbReference>
<dbReference type="GO" id="GO:0008284">
    <property type="term" value="P:positive regulation of cell population proliferation"/>
    <property type="evidence" value="ECO:0000315"/>
    <property type="project" value="RGD"/>
</dbReference>
<dbReference type="GO" id="GO:0010811">
    <property type="term" value="P:positive regulation of cell-substrate adhesion"/>
    <property type="evidence" value="ECO:0000266"/>
    <property type="project" value="RGD"/>
</dbReference>
<dbReference type="GO" id="GO:0120162">
    <property type="term" value="P:positive regulation of cold-induced thermogenesis"/>
    <property type="evidence" value="ECO:0000250"/>
    <property type="project" value="YuBioLab"/>
</dbReference>
<dbReference type="GO" id="GO:0007204">
    <property type="term" value="P:positive regulation of cytosolic calcium ion concentration"/>
    <property type="evidence" value="ECO:0000315"/>
    <property type="project" value="RGD"/>
</dbReference>
<dbReference type="GO" id="GO:1904037">
    <property type="term" value="P:positive regulation of epithelial cell apoptotic process"/>
    <property type="evidence" value="ECO:0000315"/>
    <property type="project" value="RGD"/>
</dbReference>
<dbReference type="GO" id="GO:1902728">
    <property type="term" value="P:positive regulation of growth factor dependent skeletal muscle satellite cell proliferation"/>
    <property type="evidence" value="ECO:0000315"/>
    <property type="project" value="RGD"/>
</dbReference>
<dbReference type="GO" id="GO:0060399">
    <property type="term" value="P:positive regulation of growth hormone receptor signaling pathway"/>
    <property type="evidence" value="ECO:0000266"/>
    <property type="project" value="RGD"/>
</dbReference>
<dbReference type="GO" id="GO:0032024">
    <property type="term" value="P:positive regulation of insulin secretion"/>
    <property type="evidence" value="ECO:0000315"/>
    <property type="project" value="RGD"/>
</dbReference>
<dbReference type="GO" id="GO:0032731">
    <property type="term" value="P:positive regulation of interleukin-1 beta production"/>
    <property type="evidence" value="ECO:0000315"/>
    <property type="project" value="RGD"/>
</dbReference>
<dbReference type="GO" id="GO:0070665">
    <property type="term" value="P:positive regulation of leukocyte proliferation"/>
    <property type="evidence" value="ECO:0000266"/>
    <property type="project" value="RGD"/>
</dbReference>
<dbReference type="GO" id="GO:0043410">
    <property type="term" value="P:positive regulation of MAPK cascade"/>
    <property type="evidence" value="ECO:0000315"/>
    <property type="project" value="RGD"/>
</dbReference>
<dbReference type="GO" id="GO:0045348">
    <property type="term" value="P:positive regulation of MHC class II biosynthetic process"/>
    <property type="evidence" value="ECO:0000266"/>
    <property type="project" value="RGD"/>
</dbReference>
<dbReference type="GO" id="GO:0032819">
    <property type="term" value="P:positive regulation of natural killer cell proliferation"/>
    <property type="evidence" value="ECO:0000266"/>
    <property type="project" value="RGD"/>
</dbReference>
<dbReference type="GO" id="GO:0045429">
    <property type="term" value="P:positive regulation of nitric oxide biosynthetic process"/>
    <property type="evidence" value="ECO:0000315"/>
    <property type="project" value="RGD"/>
</dbReference>
<dbReference type="GO" id="GO:0051142">
    <property type="term" value="P:positive regulation of NK T cell proliferation"/>
    <property type="evidence" value="ECO:0000266"/>
    <property type="project" value="RGD"/>
</dbReference>
<dbReference type="GO" id="GO:0051897">
    <property type="term" value="P:positive regulation of phosphatidylinositol 3-kinase/protein kinase B signal transduction"/>
    <property type="evidence" value="ECO:0000266"/>
    <property type="project" value="RGD"/>
</dbReference>
<dbReference type="GO" id="GO:0010572">
    <property type="term" value="P:positive regulation of platelet activation"/>
    <property type="evidence" value="ECO:0000266"/>
    <property type="project" value="RGD"/>
</dbReference>
<dbReference type="GO" id="GO:1901731">
    <property type="term" value="P:positive regulation of platelet aggregation"/>
    <property type="evidence" value="ECO:0000266"/>
    <property type="project" value="RGD"/>
</dbReference>
<dbReference type="GO" id="GO:0042307">
    <property type="term" value="P:positive regulation of protein import into nucleus"/>
    <property type="evidence" value="ECO:0000315"/>
    <property type="project" value="RGD"/>
</dbReference>
<dbReference type="GO" id="GO:0046427">
    <property type="term" value="P:positive regulation of receptor signaling pathway via JAK-STAT"/>
    <property type="evidence" value="ECO:0000266"/>
    <property type="project" value="RGD"/>
</dbReference>
<dbReference type="GO" id="GO:0060391">
    <property type="term" value="P:positive regulation of SMAD protein signal transduction"/>
    <property type="evidence" value="ECO:0000266"/>
    <property type="project" value="RGD"/>
</dbReference>
<dbReference type="GO" id="GO:0042102">
    <property type="term" value="P:positive regulation of T cell proliferation"/>
    <property type="evidence" value="ECO:0000266"/>
    <property type="project" value="RGD"/>
</dbReference>
<dbReference type="GO" id="GO:0045944">
    <property type="term" value="P:positive regulation of transcription by RNA polymerase II"/>
    <property type="evidence" value="ECO:0000315"/>
    <property type="project" value="BHF-UCL"/>
</dbReference>
<dbReference type="GO" id="GO:0032760">
    <property type="term" value="P:positive regulation of tumor necrosis factor production"/>
    <property type="evidence" value="ECO:0000266"/>
    <property type="project" value="RGD"/>
</dbReference>
<dbReference type="GO" id="GO:0032729">
    <property type="term" value="P:positive regulation of type II interferon production"/>
    <property type="evidence" value="ECO:0000266"/>
    <property type="project" value="RGD"/>
</dbReference>
<dbReference type="GO" id="GO:0042531">
    <property type="term" value="P:positive regulation of tyrosine phosphorylation of STAT protein"/>
    <property type="evidence" value="ECO:0000250"/>
    <property type="project" value="UniProtKB"/>
</dbReference>
<dbReference type="GO" id="GO:1904707">
    <property type="term" value="P:positive regulation of vascular associated smooth muscle cell proliferation"/>
    <property type="evidence" value="ECO:0000315"/>
    <property type="project" value="RGD"/>
</dbReference>
<dbReference type="GO" id="GO:0035166">
    <property type="term" value="P:post-embryonic hemopoiesis"/>
    <property type="evidence" value="ECO:0000266"/>
    <property type="project" value="RGD"/>
</dbReference>
<dbReference type="GO" id="GO:0043687">
    <property type="term" value="P:post-translational protein modification"/>
    <property type="evidence" value="ECO:0000250"/>
    <property type="project" value="UniProtKB"/>
</dbReference>
<dbReference type="GO" id="GO:0046777">
    <property type="term" value="P:protein autophosphorylation"/>
    <property type="evidence" value="ECO:0000250"/>
    <property type="project" value="UniProtKB"/>
</dbReference>
<dbReference type="GO" id="GO:0042981">
    <property type="term" value="P:regulation of apoptotic process"/>
    <property type="evidence" value="ECO:0000318"/>
    <property type="project" value="GO_Central"/>
</dbReference>
<dbReference type="GO" id="GO:0050727">
    <property type="term" value="P:regulation of inflammatory response"/>
    <property type="evidence" value="ECO:0000266"/>
    <property type="project" value="RGD"/>
</dbReference>
<dbReference type="GO" id="GO:0045428">
    <property type="term" value="P:regulation of nitric oxide biosynthetic process"/>
    <property type="evidence" value="ECO:0000316"/>
    <property type="project" value="ARUK-UCL"/>
</dbReference>
<dbReference type="GO" id="GO:1905539">
    <property type="term" value="P:regulation of postsynapse to nucleus signaling pathway"/>
    <property type="evidence" value="ECO:0000314"/>
    <property type="project" value="SynGO"/>
</dbReference>
<dbReference type="GO" id="GO:0046677">
    <property type="term" value="P:response to antibiotic"/>
    <property type="evidence" value="ECO:0000266"/>
    <property type="project" value="RGD"/>
</dbReference>
<dbReference type="GO" id="GO:0033194">
    <property type="term" value="P:response to hydroperoxide"/>
    <property type="evidence" value="ECO:0000315"/>
    <property type="project" value="RGD"/>
</dbReference>
<dbReference type="GO" id="GO:0070671">
    <property type="term" value="P:response to interleukin-12"/>
    <property type="evidence" value="ECO:0000266"/>
    <property type="project" value="RGD"/>
</dbReference>
<dbReference type="GO" id="GO:0006979">
    <property type="term" value="P:response to oxidative stress"/>
    <property type="evidence" value="ECO:0000315"/>
    <property type="project" value="RGD"/>
</dbReference>
<dbReference type="GO" id="GO:0034612">
    <property type="term" value="P:response to tumor necrosis factor"/>
    <property type="evidence" value="ECO:0000266"/>
    <property type="project" value="RGD"/>
</dbReference>
<dbReference type="GO" id="GO:0007165">
    <property type="term" value="P:signal transduction"/>
    <property type="evidence" value="ECO:0000250"/>
    <property type="project" value="UniProtKB"/>
</dbReference>
<dbReference type="GO" id="GO:0034050">
    <property type="term" value="P:symbiont-induced defense-related programmed cell death"/>
    <property type="evidence" value="ECO:0000266"/>
    <property type="project" value="RGD"/>
</dbReference>
<dbReference type="GO" id="GO:0038163">
    <property type="term" value="P:thrombopoietin-mediated signaling pathway"/>
    <property type="evidence" value="ECO:0000266"/>
    <property type="project" value="RGD"/>
</dbReference>
<dbReference type="GO" id="GO:0006366">
    <property type="term" value="P:transcription by RNA polymerase II"/>
    <property type="evidence" value="ECO:0000266"/>
    <property type="project" value="RGD"/>
</dbReference>
<dbReference type="GO" id="GO:0033209">
    <property type="term" value="P:tumor necrosis factor-mediated signaling pathway"/>
    <property type="evidence" value="ECO:0000266"/>
    <property type="project" value="RGD"/>
</dbReference>
<dbReference type="GO" id="GO:0060333">
    <property type="term" value="P:type II interferon-mediated signaling pathway"/>
    <property type="evidence" value="ECO:0000315"/>
    <property type="project" value="BHF-UCL"/>
</dbReference>
<dbReference type="CDD" id="cd14473">
    <property type="entry name" value="FERM_B-lobe"/>
    <property type="match status" value="1"/>
</dbReference>
<dbReference type="CDD" id="cd13333">
    <property type="entry name" value="FERM_C_JAK2"/>
    <property type="match status" value="1"/>
</dbReference>
<dbReference type="CDD" id="cd05078">
    <property type="entry name" value="PTK_Jak2_rpt1"/>
    <property type="match status" value="1"/>
</dbReference>
<dbReference type="CDD" id="cd14205">
    <property type="entry name" value="PTKc_Jak2_rpt2"/>
    <property type="match status" value="1"/>
</dbReference>
<dbReference type="CDD" id="cd10379">
    <property type="entry name" value="SH2_Jak2"/>
    <property type="match status" value="1"/>
</dbReference>
<dbReference type="FunFam" id="1.10.510.10:FF:000110">
    <property type="entry name" value="Tyrosine-protein kinase"/>
    <property type="match status" value="1"/>
</dbReference>
<dbReference type="FunFam" id="2.30.29.30:FF:000177">
    <property type="entry name" value="Tyrosine-protein kinase"/>
    <property type="match status" value="1"/>
</dbReference>
<dbReference type="FunFam" id="3.30.200.20:FF:000084">
    <property type="entry name" value="Tyrosine-protein kinase"/>
    <property type="match status" value="1"/>
</dbReference>
<dbReference type="FunFam" id="3.30.200.20:FF:000135">
    <property type="entry name" value="Tyrosine-protein kinase"/>
    <property type="match status" value="1"/>
</dbReference>
<dbReference type="FunFam" id="3.30.505.10:FF:000037">
    <property type="entry name" value="Tyrosine-protein kinase"/>
    <property type="match status" value="1"/>
</dbReference>
<dbReference type="FunFam" id="1.10.510.10:FF:000114">
    <property type="entry name" value="Tyrosine-protein kinase JAK2"/>
    <property type="match status" value="1"/>
</dbReference>
<dbReference type="Gene3D" id="3.30.200.20">
    <property type="entry name" value="Phosphorylase Kinase, domain 1"/>
    <property type="match status" value="2"/>
</dbReference>
<dbReference type="Gene3D" id="2.30.29.30">
    <property type="entry name" value="Pleckstrin-homology domain (PH domain)/Phosphotyrosine-binding domain (PTB)"/>
    <property type="match status" value="1"/>
</dbReference>
<dbReference type="Gene3D" id="3.30.505.10">
    <property type="entry name" value="SH2 domain"/>
    <property type="match status" value="1"/>
</dbReference>
<dbReference type="Gene3D" id="1.10.510.10">
    <property type="entry name" value="Transferase(Phosphotransferase) domain 1"/>
    <property type="match status" value="2"/>
</dbReference>
<dbReference type="InterPro" id="IPR019749">
    <property type="entry name" value="Band_41_domain"/>
</dbReference>
<dbReference type="InterPro" id="IPR035963">
    <property type="entry name" value="FERM_2"/>
</dbReference>
<dbReference type="InterPro" id="IPR019748">
    <property type="entry name" value="FERM_central"/>
</dbReference>
<dbReference type="InterPro" id="IPR000299">
    <property type="entry name" value="FERM_domain"/>
</dbReference>
<dbReference type="InterPro" id="IPR041155">
    <property type="entry name" value="FERM_F1"/>
</dbReference>
<dbReference type="InterPro" id="IPR041046">
    <property type="entry name" value="FERM_F2"/>
</dbReference>
<dbReference type="InterPro" id="IPR051286">
    <property type="entry name" value="JAK"/>
</dbReference>
<dbReference type="InterPro" id="IPR041381">
    <property type="entry name" value="JAK1-3/TYK2_PHL_dom"/>
</dbReference>
<dbReference type="InterPro" id="IPR037838">
    <property type="entry name" value="JAK2_FERM_C-lobe"/>
</dbReference>
<dbReference type="InterPro" id="IPR035860">
    <property type="entry name" value="JAK2_SH2"/>
</dbReference>
<dbReference type="InterPro" id="IPR011009">
    <property type="entry name" value="Kinase-like_dom_sf"/>
</dbReference>
<dbReference type="InterPro" id="IPR011993">
    <property type="entry name" value="PH-like_dom_sf"/>
</dbReference>
<dbReference type="InterPro" id="IPR000719">
    <property type="entry name" value="Prot_kinase_dom"/>
</dbReference>
<dbReference type="InterPro" id="IPR017441">
    <property type="entry name" value="Protein_kinase_ATP_BS"/>
</dbReference>
<dbReference type="InterPro" id="IPR035588">
    <property type="entry name" value="PTK_Jak2_rpt1"/>
</dbReference>
<dbReference type="InterPro" id="IPR035589">
    <property type="entry name" value="PTKc_Jak2_rpt2"/>
</dbReference>
<dbReference type="InterPro" id="IPR001245">
    <property type="entry name" value="Ser-Thr/Tyr_kinase_cat_dom"/>
</dbReference>
<dbReference type="InterPro" id="IPR000980">
    <property type="entry name" value="SH2"/>
</dbReference>
<dbReference type="InterPro" id="IPR036860">
    <property type="entry name" value="SH2_dom_sf"/>
</dbReference>
<dbReference type="InterPro" id="IPR008266">
    <property type="entry name" value="Tyr_kinase_AS"/>
</dbReference>
<dbReference type="InterPro" id="IPR020635">
    <property type="entry name" value="Tyr_kinase_cat_dom"/>
</dbReference>
<dbReference type="InterPro" id="IPR016251">
    <property type="entry name" value="Tyr_kinase_non-rcpt_Jak/Tyk2"/>
</dbReference>
<dbReference type="InterPro" id="IPR020693">
    <property type="entry name" value="Tyr_kinase_non-rcpt_Jak2"/>
</dbReference>
<dbReference type="PANTHER" id="PTHR45807">
    <property type="entry name" value="TYROSINE-PROTEIN KINASE HOPSCOTCH"/>
    <property type="match status" value="1"/>
</dbReference>
<dbReference type="PANTHER" id="PTHR45807:SF1">
    <property type="entry name" value="TYROSINE-PROTEIN KINASE JAK2"/>
    <property type="match status" value="1"/>
</dbReference>
<dbReference type="Pfam" id="PF18379">
    <property type="entry name" value="FERM_F1"/>
    <property type="match status" value="1"/>
</dbReference>
<dbReference type="Pfam" id="PF18377">
    <property type="entry name" value="FERM_F2"/>
    <property type="match status" value="1"/>
</dbReference>
<dbReference type="Pfam" id="PF17887">
    <property type="entry name" value="Jak1_Phl"/>
    <property type="match status" value="1"/>
</dbReference>
<dbReference type="Pfam" id="PF07714">
    <property type="entry name" value="PK_Tyr_Ser-Thr"/>
    <property type="match status" value="2"/>
</dbReference>
<dbReference type="Pfam" id="PF21990">
    <property type="entry name" value="SH2_1"/>
    <property type="match status" value="1"/>
</dbReference>
<dbReference type="PIRSF" id="PIRSF000636">
    <property type="entry name" value="TyrPK_Jak"/>
    <property type="match status" value="1"/>
</dbReference>
<dbReference type="PRINTS" id="PR01823">
    <property type="entry name" value="JANUSKINASE"/>
</dbReference>
<dbReference type="PRINTS" id="PR01825">
    <property type="entry name" value="JANUSKINASE2"/>
</dbReference>
<dbReference type="PRINTS" id="PR00109">
    <property type="entry name" value="TYRKINASE"/>
</dbReference>
<dbReference type="SMART" id="SM00295">
    <property type="entry name" value="B41"/>
    <property type="match status" value="1"/>
</dbReference>
<dbReference type="SMART" id="SM00252">
    <property type="entry name" value="SH2"/>
    <property type="match status" value="1"/>
</dbReference>
<dbReference type="SMART" id="SM00219">
    <property type="entry name" value="TyrKc"/>
    <property type="match status" value="2"/>
</dbReference>
<dbReference type="SUPFAM" id="SSF50729">
    <property type="entry name" value="PH domain-like"/>
    <property type="match status" value="1"/>
</dbReference>
<dbReference type="SUPFAM" id="SSF56112">
    <property type="entry name" value="Protein kinase-like (PK-like)"/>
    <property type="match status" value="2"/>
</dbReference>
<dbReference type="SUPFAM" id="SSF47031">
    <property type="entry name" value="Second domain of FERM"/>
    <property type="match status" value="1"/>
</dbReference>
<dbReference type="SUPFAM" id="SSF55550">
    <property type="entry name" value="SH2 domain"/>
    <property type="match status" value="1"/>
</dbReference>
<dbReference type="PROSITE" id="PS50057">
    <property type="entry name" value="FERM_3"/>
    <property type="match status" value="1"/>
</dbReference>
<dbReference type="PROSITE" id="PS00107">
    <property type="entry name" value="PROTEIN_KINASE_ATP"/>
    <property type="match status" value="1"/>
</dbReference>
<dbReference type="PROSITE" id="PS50011">
    <property type="entry name" value="PROTEIN_KINASE_DOM"/>
    <property type="match status" value="2"/>
</dbReference>
<dbReference type="PROSITE" id="PS00109">
    <property type="entry name" value="PROTEIN_KINASE_TYR"/>
    <property type="match status" value="1"/>
</dbReference>
<dbReference type="PROSITE" id="PS50001">
    <property type="entry name" value="SH2"/>
    <property type="match status" value="1"/>
</dbReference>
<protein>
    <recommendedName>
        <fullName evidence="9">Tyrosine-protein kinase JAK2</fullName>
        <ecNumber evidence="2">2.7.10.2</ecNumber>
    </recommendedName>
    <alternativeName>
        <fullName>Janus kinase 2</fullName>
        <shortName>JAK-2</shortName>
    </alternativeName>
</protein>
<gene>
    <name evidence="10" type="primary">Jak2</name>
</gene>
<name>JAK2_RAT</name>